<accession>Q2W0M1</accession>
<organism>
    <name type="scientific">Paramagnetospirillum magneticum (strain ATCC 700264 / AMB-1)</name>
    <name type="common">Magnetospirillum magneticum</name>
    <dbReference type="NCBI Taxonomy" id="342108"/>
    <lineage>
        <taxon>Bacteria</taxon>
        <taxon>Pseudomonadati</taxon>
        <taxon>Pseudomonadota</taxon>
        <taxon>Alphaproteobacteria</taxon>
        <taxon>Rhodospirillales</taxon>
        <taxon>Magnetospirillaceae</taxon>
        <taxon>Paramagnetospirillum</taxon>
    </lineage>
</organism>
<name>UVRC_PARM1</name>
<dbReference type="EMBL" id="AP007255">
    <property type="protein sequence ID" value="BAE52604.1"/>
    <property type="molecule type" value="Genomic_DNA"/>
</dbReference>
<dbReference type="RefSeq" id="WP_011386154.1">
    <property type="nucleotide sequence ID" value="NC_007626.1"/>
</dbReference>
<dbReference type="SMR" id="Q2W0M1"/>
<dbReference type="STRING" id="342108.amb3800"/>
<dbReference type="KEGG" id="mag:amb3800"/>
<dbReference type="HOGENOM" id="CLU_014841_3_0_5"/>
<dbReference type="OrthoDB" id="9804933at2"/>
<dbReference type="Proteomes" id="UP000007058">
    <property type="component" value="Chromosome"/>
</dbReference>
<dbReference type="GO" id="GO:0005737">
    <property type="term" value="C:cytoplasm"/>
    <property type="evidence" value="ECO:0007669"/>
    <property type="project" value="UniProtKB-SubCell"/>
</dbReference>
<dbReference type="GO" id="GO:0009380">
    <property type="term" value="C:excinuclease repair complex"/>
    <property type="evidence" value="ECO:0007669"/>
    <property type="project" value="InterPro"/>
</dbReference>
<dbReference type="GO" id="GO:0003677">
    <property type="term" value="F:DNA binding"/>
    <property type="evidence" value="ECO:0007669"/>
    <property type="project" value="UniProtKB-UniRule"/>
</dbReference>
<dbReference type="GO" id="GO:0009381">
    <property type="term" value="F:excinuclease ABC activity"/>
    <property type="evidence" value="ECO:0007669"/>
    <property type="project" value="UniProtKB-UniRule"/>
</dbReference>
<dbReference type="GO" id="GO:0006289">
    <property type="term" value="P:nucleotide-excision repair"/>
    <property type="evidence" value="ECO:0007669"/>
    <property type="project" value="UniProtKB-UniRule"/>
</dbReference>
<dbReference type="GO" id="GO:0009432">
    <property type="term" value="P:SOS response"/>
    <property type="evidence" value="ECO:0007669"/>
    <property type="project" value="UniProtKB-UniRule"/>
</dbReference>
<dbReference type="CDD" id="cd10434">
    <property type="entry name" value="GIY-YIG_UvrC_Cho"/>
    <property type="match status" value="1"/>
</dbReference>
<dbReference type="FunFam" id="3.30.420.340:FF:000001">
    <property type="entry name" value="UvrABC system protein C"/>
    <property type="match status" value="1"/>
</dbReference>
<dbReference type="FunFam" id="3.40.1440.10:FF:000001">
    <property type="entry name" value="UvrABC system protein C"/>
    <property type="match status" value="1"/>
</dbReference>
<dbReference type="Gene3D" id="1.10.150.20">
    <property type="entry name" value="5' to 3' exonuclease, C-terminal subdomain"/>
    <property type="match status" value="1"/>
</dbReference>
<dbReference type="Gene3D" id="3.40.1440.10">
    <property type="entry name" value="GIY-YIG endonuclease"/>
    <property type="match status" value="1"/>
</dbReference>
<dbReference type="Gene3D" id="4.10.860.10">
    <property type="entry name" value="UVR domain"/>
    <property type="match status" value="1"/>
</dbReference>
<dbReference type="Gene3D" id="3.30.420.340">
    <property type="entry name" value="UvrC, RNAse H endonuclease domain"/>
    <property type="match status" value="1"/>
</dbReference>
<dbReference type="HAMAP" id="MF_00203">
    <property type="entry name" value="UvrC"/>
    <property type="match status" value="1"/>
</dbReference>
<dbReference type="InterPro" id="IPR000305">
    <property type="entry name" value="GIY-YIG_endonuc"/>
</dbReference>
<dbReference type="InterPro" id="IPR035901">
    <property type="entry name" value="GIY-YIG_endonuc_sf"/>
</dbReference>
<dbReference type="InterPro" id="IPR047296">
    <property type="entry name" value="GIY-YIG_UvrC_Cho"/>
</dbReference>
<dbReference type="InterPro" id="IPR003583">
    <property type="entry name" value="Hlx-hairpin-Hlx_DNA-bd_motif"/>
</dbReference>
<dbReference type="InterPro" id="IPR010994">
    <property type="entry name" value="RuvA_2-like"/>
</dbReference>
<dbReference type="InterPro" id="IPR001943">
    <property type="entry name" value="UVR_dom"/>
</dbReference>
<dbReference type="InterPro" id="IPR036876">
    <property type="entry name" value="UVR_dom_sf"/>
</dbReference>
<dbReference type="InterPro" id="IPR050066">
    <property type="entry name" value="UvrABC_protein_C"/>
</dbReference>
<dbReference type="InterPro" id="IPR004791">
    <property type="entry name" value="UvrC"/>
</dbReference>
<dbReference type="InterPro" id="IPR001162">
    <property type="entry name" value="UvrC_RNase_H_dom"/>
</dbReference>
<dbReference type="InterPro" id="IPR038476">
    <property type="entry name" value="UvrC_RNase_H_dom_sf"/>
</dbReference>
<dbReference type="NCBIfam" id="NF001824">
    <property type="entry name" value="PRK00558.1-5"/>
    <property type="match status" value="1"/>
</dbReference>
<dbReference type="NCBIfam" id="TIGR00194">
    <property type="entry name" value="uvrC"/>
    <property type="match status" value="1"/>
</dbReference>
<dbReference type="PANTHER" id="PTHR30562:SF1">
    <property type="entry name" value="UVRABC SYSTEM PROTEIN C"/>
    <property type="match status" value="1"/>
</dbReference>
<dbReference type="PANTHER" id="PTHR30562">
    <property type="entry name" value="UVRC/OXIDOREDUCTASE"/>
    <property type="match status" value="1"/>
</dbReference>
<dbReference type="Pfam" id="PF01541">
    <property type="entry name" value="GIY-YIG"/>
    <property type="match status" value="1"/>
</dbReference>
<dbReference type="Pfam" id="PF14520">
    <property type="entry name" value="HHH_5"/>
    <property type="match status" value="1"/>
</dbReference>
<dbReference type="Pfam" id="PF02151">
    <property type="entry name" value="UVR"/>
    <property type="match status" value="1"/>
</dbReference>
<dbReference type="Pfam" id="PF22920">
    <property type="entry name" value="UvrC_RNaseH"/>
    <property type="match status" value="1"/>
</dbReference>
<dbReference type="Pfam" id="PF08459">
    <property type="entry name" value="UvrC_RNaseH_dom"/>
    <property type="match status" value="1"/>
</dbReference>
<dbReference type="SMART" id="SM00465">
    <property type="entry name" value="GIYc"/>
    <property type="match status" value="1"/>
</dbReference>
<dbReference type="SMART" id="SM00278">
    <property type="entry name" value="HhH1"/>
    <property type="match status" value="2"/>
</dbReference>
<dbReference type="SUPFAM" id="SSF46600">
    <property type="entry name" value="C-terminal UvrC-binding domain of UvrB"/>
    <property type="match status" value="1"/>
</dbReference>
<dbReference type="SUPFAM" id="SSF82771">
    <property type="entry name" value="GIY-YIG endonuclease"/>
    <property type="match status" value="1"/>
</dbReference>
<dbReference type="SUPFAM" id="SSF47781">
    <property type="entry name" value="RuvA domain 2-like"/>
    <property type="match status" value="1"/>
</dbReference>
<dbReference type="PROSITE" id="PS50164">
    <property type="entry name" value="GIY_YIG"/>
    <property type="match status" value="1"/>
</dbReference>
<dbReference type="PROSITE" id="PS50151">
    <property type="entry name" value="UVR"/>
    <property type="match status" value="1"/>
</dbReference>
<dbReference type="PROSITE" id="PS50165">
    <property type="entry name" value="UVRC"/>
    <property type="match status" value="1"/>
</dbReference>
<comment type="function">
    <text evidence="1">The UvrABC repair system catalyzes the recognition and processing of DNA lesions. UvrC both incises the 5' and 3' sides of the lesion. The N-terminal half is responsible for the 3' incision and the C-terminal half is responsible for the 5' incision.</text>
</comment>
<comment type="subunit">
    <text evidence="1">Interacts with UvrB in an incision complex.</text>
</comment>
<comment type="subcellular location">
    <subcellularLocation>
        <location evidence="1">Cytoplasm</location>
    </subcellularLocation>
</comment>
<comment type="similarity">
    <text evidence="1">Belongs to the UvrC family.</text>
</comment>
<proteinExistence type="inferred from homology"/>
<reference key="1">
    <citation type="journal article" date="2005" name="DNA Res.">
        <title>Complete genome sequence of the facultative anaerobic magnetotactic bacterium Magnetospirillum sp. strain AMB-1.</title>
        <authorList>
            <person name="Matsunaga T."/>
            <person name="Okamura Y."/>
            <person name="Fukuda Y."/>
            <person name="Wahyudi A.T."/>
            <person name="Murase Y."/>
            <person name="Takeyama H."/>
        </authorList>
    </citation>
    <scope>NUCLEOTIDE SEQUENCE [LARGE SCALE GENOMIC DNA]</scope>
    <source>
        <strain>ATCC 700264 / AMB-1</strain>
    </source>
</reference>
<gene>
    <name evidence="1" type="primary">uvrC</name>
    <name type="ordered locus">amb3800</name>
</gene>
<feature type="chain" id="PRO_0000264907" description="UvrABC system protein C">
    <location>
        <begin position="1"/>
        <end position="624"/>
    </location>
</feature>
<feature type="domain" description="GIY-YIG" evidence="1">
    <location>
        <begin position="27"/>
        <end position="105"/>
    </location>
</feature>
<feature type="domain" description="UVR" evidence="1">
    <location>
        <begin position="215"/>
        <end position="250"/>
    </location>
</feature>
<protein>
    <recommendedName>
        <fullName evidence="1">UvrABC system protein C</fullName>
        <shortName evidence="1">Protein UvrC</shortName>
    </recommendedName>
    <alternativeName>
        <fullName evidence="1">Excinuclease ABC subunit C</fullName>
    </alternativeName>
</protein>
<keyword id="KW-0963">Cytoplasm</keyword>
<keyword id="KW-0227">DNA damage</keyword>
<keyword id="KW-0228">DNA excision</keyword>
<keyword id="KW-0234">DNA repair</keyword>
<keyword id="KW-0267">Excision nuclease</keyword>
<keyword id="KW-0742">SOS response</keyword>
<evidence type="ECO:0000255" key="1">
    <source>
        <dbReference type="HAMAP-Rule" id="MF_00203"/>
    </source>
</evidence>
<sequence length="624" mass="68967">MTEADSSATPLARGVEVIAQVVATLPLSPGVYRMLSGKGDVLYVGKAKSLKKRVVAYTRPDRMPLRIQRMIAETASMEVVTTRTEVEALLLESNLIKSLGPRYNILLKDDKTFPHILITADHDWPQVLKHRGARNRKGEYFGPFASAGAVNQTLAALQRAFLLRSCSDSVFASRTRPCLLFQIKRCSAPCVERIDRDEYLALVEEARAFLSGQSRRVQHDLTARMESAAEAMEYEAAAVFRDRIRALTRIQAHQDINPAEVEEADVVALHQAGDGVCIQVFFFRSGCNYGNRAYFPVHAQGEEAPQIMAAFLGQFYADKTPPREILLSLEPDEVAIVAQALSEKAGRKVTLSVPKRGDRKRLVEHAHDNARDALGRRMAESGAQRKLLEGVAELFGMESAPERIEVYDNSHIQGSDAVGAMIVAGPDGLMKSAYRKFNIRSTDLTPGDDFGMMREVLTRRFARAQKEDPDRDRGLWPDLALIDGGRGQLNAALGVLAELGIDDVMLVGIAKGPDRNAGRERFFLAGKEPISLESRHPVLYFLQRLRDEAHRFAIGTHRARRSKGLVQSTLDALPGIGPKRKKALLHHFGSARAVAEAGLPDLESVEGISHAMAKKIHDYFHPEG</sequence>